<sequence length="122" mass="13419">MIQMQTNLDVADNSGARRVMCIKVLGGSKRKYASIGDVIVVSIKEAIPRGRVKKGDVMKAVVVRTAKDIRRPDGSVIRFDTNAAVLIDNKKEPIGTRIFGPVPRELRAKNHMKIISLAPEVL</sequence>
<evidence type="ECO:0000255" key="1">
    <source>
        <dbReference type="HAMAP-Rule" id="MF_01367"/>
    </source>
</evidence>
<evidence type="ECO:0000305" key="2"/>
<comment type="function">
    <text evidence="1">Binds to 23S rRNA. Forms part of two intersubunit bridges in the 70S ribosome.</text>
</comment>
<comment type="subunit">
    <text evidence="1">Part of the 50S ribosomal subunit. Forms a cluster with proteins L3 and L19. In the 70S ribosome, L14 and L19 interact and together make contacts with the 16S rRNA in bridges B5 and B8.</text>
</comment>
<comment type="similarity">
    <text evidence="1">Belongs to the universal ribosomal protein uL14 family.</text>
</comment>
<protein>
    <recommendedName>
        <fullName evidence="1">Large ribosomal subunit protein uL14</fullName>
    </recommendedName>
    <alternativeName>
        <fullName evidence="2">50S ribosomal protein L14</fullName>
    </alternativeName>
</protein>
<accession>Q2K9K6</accession>
<organism>
    <name type="scientific">Rhizobium etli (strain ATCC 51251 / DSM 11541 / JCM 21823 / NBRC 15573 / CFN 42)</name>
    <dbReference type="NCBI Taxonomy" id="347834"/>
    <lineage>
        <taxon>Bacteria</taxon>
        <taxon>Pseudomonadati</taxon>
        <taxon>Pseudomonadota</taxon>
        <taxon>Alphaproteobacteria</taxon>
        <taxon>Hyphomicrobiales</taxon>
        <taxon>Rhizobiaceae</taxon>
        <taxon>Rhizobium/Agrobacterium group</taxon>
        <taxon>Rhizobium</taxon>
    </lineage>
</organism>
<feature type="chain" id="PRO_0000266537" description="Large ribosomal subunit protein uL14">
    <location>
        <begin position="1"/>
        <end position="122"/>
    </location>
</feature>
<name>RL14_RHIEC</name>
<gene>
    <name evidence="1" type="primary">rplN</name>
    <name type="ordered locus">RHE_CH01685</name>
</gene>
<reference key="1">
    <citation type="journal article" date="2006" name="Proc. Natl. Acad. Sci. U.S.A.">
        <title>The partitioned Rhizobium etli genome: genetic and metabolic redundancy in seven interacting replicons.</title>
        <authorList>
            <person name="Gonzalez V."/>
            <person name="Santamaria R.I."/>
            <person name="Bustos P."/>
            <person name="Hernandez-Gonzalez I."/>
            <person name="Medrano-Soto A."/>
            <person name="Moreno-Hagelsieb G."/>
            <person name="Janga S.C."/>
            <person name="Ramirez M.A."/>
            <person name="Jimenez-Jacinto V."/>
            <person name="Collado-Vides J."/>
            <person name="Davila G."/>
        </authorList>
    </citation>
    <scope>NUCLEOTIDE SEQUENCE [LARGE SCALE GENOMIC DNA]</scope>
    <source>
        <strain>ATCC 51251 / DSM 11541 / JCM 21823 / NBRC 15573 / CFN 42</strain>
    </source>
</reference>
<proteinExistence type="inferred from homology"/>
<keyword id="KW-1185">Reference proteome</keyword>
<keyword id="KW-0687">Ribonucleoprotein</keyword>
<keyword id="KW-0689">Ribosomal protein</keyword>
<keyword id="KW-0694">RNA-binding</keyword>
<keyword id="KW-0699">rRNA-binding</keyword>
<dbReference type="EMBL" id="CP000133">
    <property type="protein sequence ID" value="ABC90480.1"/>
    <property type="molecule type" value="Genomic_DNA"/>
</dbReference>
<dbReference type="RefSeq" id="WP_003573790.1">
    <property type="nucleotide sequence ID" value="NC_007761.1"/>
</dbReference>
<dbReference type="SMR" id="Q2K9K6"/>
<dbReference type="GeneID" id="91148138"/>
<dbReference type="KEGG" id="ret:RHE_CH01685"/>
<dbReference type="eggNOG" id="COG0093">
    <property type="taxonomic scope" value="Bacteria"/>
</dbReference>
<dbReference type="HOGENOM" id="CLU_095071_2_1_5"/>
<dbReference type="OrthoDB" id="9806379at2"/>
<dbReference type="Proteomes" id="UP000001936">
    <property type="component" value="Chromosome"/>
</dbReference>
<dbReference type="GO" id="GO:0022625">
    <property type="term" value="C:cytosolic large ribosomal subunit"/>
    <property type="evidence" value="ECO:0007669"/>
    <property type="project" value="TreeGrafter"/>
</dbReference>
<dbReference type="GO" id="GO:0070180">
    <property type="term" value="F:large ribosomal subunit rRNA binding"/>
    <property type="evidence" value="ECO:0007669"/>
    <property type="project" value="TreeGrafter"/>
</dbReference>
<dbReference type="GO" id="GO:0003735">
    <property type="term" value="F:structural constituent of ribosome"/>
    <property type="evidence" value="ECO:0007669"/>
    <property type="project" value="InterPro"/>
</dbReference>
<dbReference type="GO" id="GO:0006412">
    <property type="term" value="P:translation"/>
    <property type="evidence" value="ECO:0007669"/>
    <property type="project" value="UniProtKB-UniRule"/>
</dbReference>
<dbReference type="CDD" id="cd00337">
    <property type="entry name" value="Ribosomal_uL14"/>
    <property type="match status" value="1"/>
</dbReference>
<dbReference type="FunFam" id="2.40.150.20:FF:000001">
    <property type="entry name" value="50S ribosomal protein L14"/>
    <property type="match status" value="1"/>
</dbReference>
<dbReference type="Gene3D" id="2.40.150.20">
    <property type="entry name" value="Ribosomal protein L14"/>
    <property type="match status" value="1"/>
</dbReference>
<dbReference type="HAMAP" id="MF_01367">
    <property type="entry name" value="Ribosomal_uL14"/>
    <property type="match status" value="1"/>
</dbReference>
<dbReference type="InterPro" id="IPR000218">
    <property type="entry name" value="Ribosomal_uL14"/>
</dbReference>
<dbReference type="InterPro" id="IPR005745">
    <property type="entry name" value="Ribosomal_uL14_bac-type"/>
</dbReference>
<dbReference type="InterPro" id="IPR019972">
    <property type="entry name" value="Ribosomal_uL14_CS"/>
</dbReference>
<dbReference type="InterPro" id="IPR036853">
    <property type="entry name" value="Ribosomal_uL14_sf"/>
</dbReference>
<dbReference type="NCBIfam" id="TIGR01067">
    <property type="entry name" value="rplN_bact"/>
    <property type="match status" value="1"/>
</dbReference>
<dbReference type="PANTHER" id="PTHR11761">
    <property type="entry name" value="50S/60S RIBOSOMAL PROTEIN L14/L23"/>
    <property type="match status" value="1"/>
</dbReference>
<dbReference type="PANTHER" id="PTHR11761:SF3">
    <property type="entry name" value="LARGE RIBOSOMAL SUBUNIT PROTEIN UL14M"/>
    <property type="match status" value="1"/>
</dbReference>
<dbReference type="Pfam" id="PF00238">
    <property type="entry name" value="Ribosomal_L14"/>
    <property type="match status" value="1"/>
</dbReference>
<dbReference type="SMART" id="SM01374">
    <property type="entry name" value="Ribosomal_L14"/>
    <property type="match status" value="1"/>
</dbReference>
<dbReference type="SUPFAM" id="SSF50193">
    <property type="entry name" value="Ribosomal protein L14"/>
    <property type="match status" value="1"/>
</dbReference>
<dbReference type="PROSITE" id="PS00049">
    <property type="entry name" value="RIBOSOMAL_L14"/>
    <property type="match status" value="1"/>
</dbReference>